<dbReference type="EMBL" id="CP000964">
    <property type="protein sequence ID" value="ACI10633.1"/>
    <property type="molecule type" value="Genomic_DNA"/>
</dbReference>
<dbReference type="SMR" id="B5Y250"/>
<dbReference type="KEGG" id="kpe:KPK_4750"/>
<dbReference type="HOGENOM" id="CLU_061989_0_0_6"/>
<dbReference type="BioCyc" id="KPNE507522:GI0B-4731-MONOMER"/>
<dbReference type="Proteomes" id="UP000001734">
    <property type="component" value="Chromosome"/>
</dbReference>
<dbReference type="GO" id="GO:0005829">
    <property type="term" value="C:cytosol"/>
    <property type="evidence" value="ECO:0007669"/>
    <property type="project" value="TreeGrafter"/>
</dbReference>
<dbReference type="GO" id="GO:0033194">
    <property type="term" value="P:response to hydroperoxide"/>
    <property type="evidence" value="ECO:0007669"/>
    <property type="project" value="TreeGrafter"/>
</dbReference>
<dbReference type="HAMAP" id="MF_00652">
    <property type="entry name" value="UPF0246"/>
    <property type="match status" value="1"/>
</dbReference>
<dbReference type="InterPro" id="IPR005583">
    <property type="entry name" value="YaaA"/>
</dbReference>
<dbReference type="NCBIfam" id="NF002541">
    <property type="entry name" value="PRK02101.1-1"/>
    <property type="match status" value="1"/>
</dbReference>
<dbReference type="NCBIfam" id="NF002542">
    <property type="entry name" value="PRK02101.1-3"/>
    <property type="match status" value="1"/>
</dbReference>
<dbReference type="PANTHER" id="PTHR30283:SF4">
    <property type="entry name" value="PEROXIDE STRESS RESISTANCE PROTEIN YAAA"/>
    <property type="match status" value="1"/>
</dbReference>
<dbReference type="PANTHER" id="PTHR30283">
    <property type="entry name" value="PEROXIDE STRESS RESPONSE PROTEIN YAAA"/>
    <property type="match status" value="1"/>
</dbReference>
<dbReference type="Pfam" id="PF03883">
    <property type="entry name" value="H2O2_YaaD"/>
    <property type="match status" value="1"/>
</dbReference>
<feature type="chain" id="PRO_1000131124" description="UPF0246 protein KPK_4750">
    <location>
        <begin position="1"/>
        <end position="257"/>
    </location>
</feature>
<accession>B5Y250</accession>
<comment type="similarity">
    <text evidence="1">Belongs to the UPF0246 family.</text>
</comment>
<reference key="1">
    <citation type="journal article" date="2008" name="PLoS Genet.">
        <title>Complete genome sequence of the N2-fixing broad host range endophyte Klebsiella pneumoniae 342 and virulence predictions verified in mice.</title>
        <authorList>
            <person name="Fouts D.E."/>
            <person name="Tyler H.L."/>
            <person name="DeBoy R.T."/>
            <person name="Daugherty S."/>
            <person name="Ren Q."/>
            <person name="Badger J.H."/>
            <person name="Durkin A.S."/>
            <person name="Huot H."/>
            <person name="Shrivastava S."/>
            <person name="Kothari S."/>
            <person name="Dodson R.J."/>
            <person name="Mohamoud Y."/>
            <person name="Khouri H."/>
            <person name="Roesch L.F.W."/>
            <person name="Krogfelt K.A."/>
            <person name="Struve C."/>
            <person name="Triplett E.W."/>
            <person name="Methe B.A."/>
        </authorList>
    </citation>
    <scope>NUCLEOTIDE SEQUENCE [LARGE SCALE GENOMIC DNA]</scope>
    <source>
        <strain>342</strain>
    </source>
</reference>
<name>Y4750_KLEP3</name>
<sequence length="257" mass="29604">MLILISPAKTLDYQSPLATTRYTQPELLEYSQQLIGIARKLTAPQIGKLMSISDKLADLNATRFHDWHPDFTPQNARQAILAFKGDVYTGLQAETLTEDDFDFAQRHLRMLSGLYGVLRPLDLMQPYRLEMGIRLENPRGKDLYQFWGETITEKLNQALQAQGDDIVINLVSDEYFKSVKTQKLQGQLIKPVFLDEKNGKFKVISFYAKKARGLMSRYIIENRLTQPEQLKAFNSEGYFFDAEASEKGELVFKRHEQ</sequence>
<protein>
    <recommendedName>
        <fullName evidence="1">UPF0246 protein KPK_4750</fullName>
    </recommendedName>
</protein>
<gene>
    <name type="ordered locus">KPK_4750</name>
</gene>
<organism>
    <name type="scientific">Klebsiella pneumoniae (strain 342)</name>
    <dbReference type="NCBI Taxonomy" id="507522"/>
    <lineage>
        <taxon>Bacteria</taxon>
        <taxon>Pseudomonadati</taxon>
        <taxon>Pseudomonadota</taxon>
        <taxon>Gammaproteobacteria</taxon>
        <taxon>Enterobacterales</taxon>
        <taxon>Enterobacteriaceae</taxon>
        <taxon>Klebsiella/Raoultella group</taxon>
        <taxon>Klebsiella</taxon>
        <taxon>Klebsiella pneumoniae complex</taxon>
    </lineage>
</organism>
<proteinExistence type="inferred from homology"/>
<evidence type="ECO:0000255" key="1">
    <source>
        <dbReference type="HAMAP-Rule" id="MF_00652"/>
    </source>
</evidence>